<accession>Q7CKJ6</accession>
<accession>Q74X80</accession>
<protein>
    <recommendedName>
        <fullName evidence="1">GTPase Obg</fullName>
        <ecNumber evidence="1">3.6.5.-</ecNumber>
    </recommendedName>
    <alternativeName>
        <fullName evidence="1">GTP-binding protein Obg</fullName>
    </alternativeName>
</protein>
<evidence type="ECO:0000255" key="1">
    <source>
        <dbReference type="HAMAP-Rule" id="MF_01454"/>
    </source>
</evidence>
<evidence type="ECO:0000255" key="2">
    <source>
        <dbReference type="PROSITE-ProRule" id="PRU01231"/>
    </source>
</evidence>
<evidence type="ECO:0000256" key="3">
    <source>
        <dbReference type="SAM" id="MobiDB-lite"/>
    </source>
</evidence>
<sequence length="390" mass="43148">MKFVDEAAILVVAGDGGNGCVSFRREKYIPNGGPDGGDGGDGGDIYLLADENLNTLIDYRFVKSFRAERGQNGQSRDCTGKRGKDITIKVPVGTRVLDQGTGEIVGDMVRHGQRLMVAKGGFHGLGNSRFKSSVNRAPRQKTMGTEGETRELMLELLLLADVGMLGLPNAGKSTFIRAVSAAKPKVADYPFTTLIPSLGVVRMDYEQSFVIADIPGLIEGASDGAGLGIRFLKHLERCRVLLHLVDLAPIDESDPAENAKVIVNELQQYSENLAEKPRWLVFNKIDLIDPEEAEKRAKAIVETLGWEGKYYMISAANRDNVNALCWDVMSFLNSQPKAMAIAESVPEKVEFMWDDYHREQLAEVEAEAEDDWDDDWDEEDDDGVEIIYER</sequence>
<dbReference type="EC" id="3.6.5.-" evidence="1"/>
<dbReference type="EMBL" id="AE009952">
    <property type="protein sequence ID" value="AAM84263.1"/>
    <property type="molecule type" value="Genomic_DNA"/>
</dbReference>
<dbReference type="EMBL" id="AE017042">
    <property type="protein sequence ID" value="AAS60844.1"/>
    <property type="molecule type" value="Genomic_DNA"/>
</dbReference>
<dbReference type="EMBL" id="AL590842">
    <property type="protein sequence ID" value="CAL22097.1"/>
    <property type="molecule type" value="Genomic_DNA"/>
</dbReference>
<dbReference type="PIR" id="AF0426">
    <property type="entry name" value="AF0426"/>
</dbReference>
<dbReference type="RefSeq" id="YP_002348398.1">
    <property type="nucleotide sequence ID" value="NC_003143.1"/>
</dbReference>
<dbReference type="SMR" id="Q7CKJ6"/>
<dbReference type="STRING" id="214092.YPO3509"/>
<dbReference type="PaxDb" id="214092-YPO3509"/>
<dbReference type="DNASU" id="1145622"/>
<dbReference type="EnsemblBacteria" id="AAS60844">
    <property type="protein sequence ID" value="AAS60844"/>
    <property type="gene ID" value="YP_0574"/>
</dbReference>
<dbReference type="KEGG" id="ype:YPO3509"/>
<dbReference type="KEGG" id="ypk:y0675"/>
<dbReference type="KEGG" id="ypm:YP_0574"/>
<dbReference type="PATRIC" id="fig|1028802.3.peg.1384"/>
<dbReference type="eggNOG" id="COG0536">
    <property type="taxonomic scope" value="Bacteria"/>
</dbReference>
<dbReference type="HOGENOM" id="CLU_011747_2_0_6"/>
<dbReference type="OMA" id="VVFDWEP"/>
<dbReference type="OrthoDB" id="9807318at2"/>
<dbReference type="Proteomes" id="UP000000815">
    <property type="component" value="Chromosome"/>
</dbReference>
<dbReference type="Proteomes" id="UP000001019">
    <property type="component" value="Chromosome"/>
</dbReference>
<dbReference type="Proteomes" id="UP000002490">
    <property type="component" value="Chromosome"/>
</dbReference>
<dbReference type="GO" id="GO:0005737">
    <property type="term" value="C:cytoplasm"/>
    <property type="evidence" value="ECO:0007669"/>
    <property type="project" value="UniProtKB-SubCell"/>
</dbReference>
<dbReference type="GO" id="GO:0005525">
    <property type="term" value="F:GTP binding"/>
    <property type="evidence" value="ECO:0000318"/>
    <property type="project" value="GO_Central"/>
</dbReference>
<dbReference type="GO" id="GO:0003924">
    <property type="term" value="F:GTPase activity"/>
    <property type="evidence" value="ECO:0000318"/>
    <property type="project" value="GO_Central"/>
</dbReference>
<dbReference type="GO" id="GO:0000287">
    <property type="term" value="F:magnesium ion binding"/>
    <property type="evidence" value="ECO:0007669"/>
    <property type="project" value="InterPro"/>
</dbReference>
<dbReference type="GO" id="GO:0042254">
    <property type="term" value="P:ribosome biogenesis"/>
    <property type="evidence" value="ECO:0007669"/>
    <property type="project" value="UniProtKB-UniRule"/>
</dbReference>
<dbReference type="CDD" id="cd01898">
    <property type="entry name" value="Obg"/>
    <property type="match status" value="1"/>
</dbReference>
<dbReference type="FunFam" id="2.70.210.12:FF:000001">
    <property type="entry name" value="GTPase Obg"/>
    <property type="match status" value="1"/>
</dbReference>
<dbReference type="FunFam" id="3.40.50.300:FF:000185">
    <property type="entry name" value="GTPase Obg"/>
    <property type="match status" value="1"/>
</dbReference>
<dbReference type="Gene3D" id="2.70.210.12">
    <property type="entry name" value="GTP1/OBG domain"/>
    <property type="match status" value="1"/>
</dbReference>
<dbReference type="Gene3D" id="3.40.50.300">
    <property type="entry name" value="P-loop containing nucleotide triphosphate hydrolases"/>
    <property type="match status" value="1"/>
</dbReference>
<dbReference type="HAMAP" id="MF_01454">
    <property type="entry name" value="GTPase_Obg"/>
    <property type="match status" value="1"/>
</dbReference>
<dbReference type="InterPro" id="IPR031167">
    <property type="entry name" value="G_OBG"/>
</dbReference>
<dbReference type="InterPro" id="IPR006073">
    <property type="entry name" value="GTP-bd"/>
</dbReference>
<dbReference type="InterPro" id="IPR014100">
    <property type="entry name" value="GTP-bd_Obg/CgtA"/>
</dbReference>
<dbReference type="InterPro" id="IPR006074">
    <property type="entry name" value="GTP1-OBG_CS"/>
</dbReference>
<dbReference type="InterPro" id="IPR006169">
    <property type="entry name" value="GTP1_OBG_dom"/>
</dbReference>
<dbReference type="InterPro" id="IPR036726">
    <property type="entry name" value="GTP1_OBG_dom_sf"/>
</dbReference>
<dbReference type="InterPro" id="IPR045086">
    <property type="entry name" value="OBG_GTPase"/>
</dbReference>
<dbReference type="InterPro" id="IPR027417">
    <property type="entry name" value="P-loop_NTPase"/>
</dbReference>
<dbReference type="NCBIfam" id="TIGR02729">
    <property type="entry name" value="Obg_CgtA"/>
    <property type="match status" value="1"/>
</dbReference>
<dbReference type="NCBIfam" id="NF008955">
    <property type="entry name" value="PRK12297.1"/>
    <property type="match status" value="1"/>
</dbReference>
<dbReference type="NCBIfam" id="NF008956">
    <property type="entry name" value="PRK12299.1"/>
    <property type="match status" value="1"/>
</dbReference>
<dbReference type="PANTHER" id="PTHR11702">
    <property type="entry name" value="DEVELOPMENTALLY REGULATED GTP-BINDING PROTEIN-RELATED"/>
    <property type="match status" value="1"/>
</dbReference>
<dbReference type="PANTHER" id="PTHR11702:SF31">
    <property type="entry name" value="MITOCHONDRIAL RIBOSOME-ASSOCIATED GTPASE 2"/>
    <property type="match status" value="1"/>
</dbReference>
<dbReference type="Pfam" id="PF01018">
    <property type="entry name" value="GTP1_OBG"/>
    <property type="match status" value="1"/>
</dbReference>
<dbReference type="Pfam" id="PF01926">
    <property type="entry name" value="MMR_HSR1"/>
    <property type="match status" value="1"/>
</dbReference>
<dbReference type="PIRSF" id="PIRSF002401">
    <property type="entry name" value="GTP_bd_Obg/CgtA"/>
    <property type="match status" value="1"/>
</dbReference>
<dbReference type="PRINTS" id="PR00326">
    <property type="entry name" value="GTP1OBG"/>
</dbReference>
<dbReference type="SUPFAM" id="SSF82051">
    <property type="entry name" value="Obg GTP-binding protein N-terminal domain"/>
    <property type="match status" value="1"/>
</dbReference>
<dbReference type="SUPFAM" id="SSF52540">
    <property type="entry name" value="P-loop containing nucleoside triphosphate hydrolases"/>
    <property type="match status" value="1"/>
</dbReference>
<dbReference type="PROSITE" id="PS51710">
    <property type="entry name" value="G_OBG"/>
    <property type="match status" value="1"/>
</dbReference>
<dbReference type="PROSITE" id="PS00905">
    <property type="entry name" value="GTP1_OBG"/>
    <property type="match status" value="1"/>
</dbReference>
<dbReference type="PROSITE" id="PS51883">
    <property type="entry name" value="OBG"/>
    <property type="match status" value="1"/>
</dbReference>
<name>OBG_YERPE</name>
<comment type="function">
    <text evidence="1">An essential GTPase which binds GTP, GDP and possibly (p)ppGpp with moderate affinity, with high nucleotide exchange rates and a fairly low GTP hydrolysis rate. Plays a role in control of the cell cycle, stress response, ribosome biogenesis and in those bacteria that undergo differentiation, in morphogenesis control.</text>
</comment>
<comment type="cofactor">
    <cofactor evidence="1">
        <name>Mg(2+)</name>
        <dbReference type="ChEBI" id="CHEBI:18420"/>
    </cofactor>
</comment>
<comment type="subunit">
    <text evidence="1">Monomer.</text>
</comment>
<comment type="subcellular location">
    <subcellularLocation>
        <location evidence="1">Cytoplasm</location>
    </subcellularLocation>
</comment>
<comment type="similarity">
    <text evidence="1">Belongs to the TRAFAC class OBG-HflX-like GTPase superfamily. OBG GTPase family.</text>
</comment>
<keyword id="KW-0963">Cytoplasm</keyword>
<keyword id="KW-0342">GTP-binding</keyword>
<keyword id="KW-0378">Hydrolase</keyword>
<keyword id="KW-0460">Magnesium</keyword>
<keyword id="KW-0479">Metal-binding</keyword>
<keyword id="KW-0547">Nucleotide-binding</keyword>
<keyword id="KW-1185">Reference proteome</keyword>
<proteinExistence type="inferred from homology"/>
<feature type="chain" id="PRO_0000386406" description="GTPase Obg">
    <location>
        <begin position="1"/>
        <end position="390"/>
    </location>
</feature>
<feature type="domain" description="Obg" evidence="2">
    <location>
        <begin position="1"/>
        <end position="159"/>
    </location>
</feature>
<feature type="domain" description="OBG-type G" evidence="1">
    <location>
        <begin position="160"/>
        <end position="333"/>
    </location>
</feature>
<feature type="region of interest" description="Disordered" evidence="3">
    <location>
        <begin position="364"/>
        <end position="390"/>
    </location>
</feature>
<feature type="compositionally biased region" description="Acidic residues" evidence="3">
    <location>
        <begin position="364"/>
        <end position="384"/>
    </location>
</feature>
<feature type="binding site" evidence="1">
    <location>
        <begin position="166"/>
        <end position="173"/>
    </location>
    <ligand>
        <name>GTP</name>
        <dbReference type="ChEBI" id="CHEBI:37565"/>
    </ligand>
</feature>
<feature type="binding site" evidence="1">
    <location>
        <position position="173"/>
    </location>
    <ligand>
        <name>Mg(2+)</name>
        <dbReference type="ChEBI" id="CHEBI:18420"/>
    </ligand>
</feature>
<feature type="binding site" evidence="1">
    <location>
        <begin position="191"/>
        <end position="195"/>
    </location>
    <ligand>
        <name>GTP</name>
        <dbReference type="ChEBI" id="CHEBI:37565"/>
    </ligand>
</feature>
<feature type="binding site" evidence="1">
    <location>
        <position position="193"/>
    </location>
    <ligand>
        <name>Mg(2+)</name>
        <dbReference type="ChEBI" id="CHEBI:18420"/>
    </ligand>
</feature>
<feature type="binding site" evidence="1">
    <location>
        <begin position="213"/>
        <end position="216"/>
    </location>
    <ligand>
        <name>GTP</name>
        <dbReference type="ChEBI" id="CHEBI:37565"/>
    </ligand>
</feature>
<feature type="binding site" evidence="1">
    <location>
        <begin position="283"/>
        <end position="286"/>
    </location>
    <ligand>
        <name>GTP</name>
        <dbReference type="ChEBI" id="CHEBI:37565"/>
    </ligand>
</feature>
<feature type="binding site" evidence="1">
    <location>
        <begin position="314"/>
        <end position="316"/>
    </location>
    <ligand>
        <name>GTP</name>
        <dbReference type="ChEBI" id="CHEBI:37565"/>
    </ligand>
</feature>
<organism>
    <name type="scientific">Yersinia pestis</name>
    <dbReference type="NCBI Taxonomy" id="632"/>
    <lineage>
        <taxon>Bacteria</taxon>
        <taxon>Pseudomonadati</taxon>
        <taxon>Pseudomonadota</taxon>
        <taxon>Gammaproteobacteria</taxon>
        <taxon>Enterobacterales</taxon>
        <taxon>Yersiniaceae</taxon>
        <taxon>Yersinia</taxon>
    </lineage>
</organism>
<gene>
    <name evidence="1" type="primary">obg</name>
    <name type="ordered locus">YPO3509</name>
    <name type="ordered locus">y0675</name>
    <name type="ordered locus">YP_0574</name>
</gene>
<reference key="1">
    <citation type="journal article" date="2002" name="J. Bacteriol.">
        <title>Genome sequence of Yersinia pestis KIM.</title>
        <authorList>
            <person name="Deng W."/>
            <person name="Burland V."/>
            <person name="Plunkett G. III"/>
            <person name="Boutin A."/>
            <person name="Mayhew G.F."/>
            <person name="Liss P."/>
            <person name="Perna N.T."/>
            <person name="Rose D.J."/>
            <person name="Mau B."/>
            <person name="Zhou S."/>
            <person name="Schwartz D.C."/>
            <person name="Fetherston J.D."/>
            <person name="Lindler L.E."/>
            <person name="Brubaker R.R."/>
            <person name="Plano G.V."/>
            <person name="Straley S.C."/>
            <person name="McDonough K.A."/>
            <person name="Nilles M.L."/>
            <person name="Matson J.S."/>
            <person name="Blattner F.R."/>
            <person name="Perry R.D."/>
        </authorList>
    </citation>
    <scope>NUCLEOTIDE SEQUENCE [LARGE SCALE GENOMIC DNA]</scope>
    <source>
        <strain>KIM10+ / Biovar Mediaevalis</strain>
    </source>
</reference>
<reference key="2">
    <citation type="journal article" date="2001" name="Nature">
        <title>Genome sequence of Yersinia pestis, the causative agent of plague.</title>
        <authorList>
            <person name="Parkhill J."/>
            <person name="Wren B.W."/>
            <person name="Thomson N.R."/>
            <person name="Titball R.W."/>
            <person name="Holden M.T.G."/>
            <person name="Prentice M.B."/>
            <person name="Sebaihia M."/>
            <person name="James K.D."/>
            <person name="Churcher C.M."/>
            <person name="Mungall K.L."/>
            <person name="Baker S."/>
            <person name="Basham D."/>
            <person name="Bentley S.D."/>
            <person name="Brooks K."/>
            <person name="Cerdeno-Tarraga A.-M."/>
            <person name="Chillingworth T."/>
            <person name="Cronin A."/>
            <person name="Davies R.M."/>
            <person name="Davis P."/>
            <person name="Dougan G."/>
            <person name="Feltwell T."/>
            <person name="Hamlin N."/>
            <person name="Holroyd S."/>
            <person name="Jagels K."/>
            <person name="Karlyshev A.V."/>
            <person name="Leather S."/>
            <person name="Moule S."/>
            <person name="Oyston P.C.F."/>
            <person name="Quail M.A."/>
            <person name="Rutherford K.M."/>
            <person name="Simmonds M."/>
            <person name="Skelton J."/>
            <person name="Stevens K."/>
            <person name="Whitehead S."/>
            <person name="Barrell B.G."/>
        </authorList>
    </citation>
    <scope>NUCLEOTIDE SEQUENCE [LARGE SCALE GENOMIC DNA]</scope>
    <source>
        <strain>CO-92 / Biovar Orientalis</strain>
    </source>
</reference>
<reference key="3">
    <citation type="journal article" date="2004" name="DNA Res.">
        <title>Complete genome sequence of Yersinia pestis strain 91001, an isolate avirulent to humans.</title>
        <authorList>
            <person name="Song Y."/>
            <person name="Tong Z."/>
            <person name="Wang J."/>
            <person name="Wang L."/>
            <person name="Guo Z."/>
            <person name="Han Y."/>
            <person name="Zhang J."/>
            <person name="Pei D."/>
            <person name="Zhou D."/>
            <person name="Qin H."/>
            <person name="Pang X."/>
            <person name="Han Y."/>
            <person name="Zhai J."/>
            <person name="Li M."/>
            <person name="Cui B."/>
            <person name="Qi Z."/>
            <person name="Jin L."/>
            <person name="Dai R."/>
            <person name="Chen F."/>
            <person name="Li S."/>
            <person name="Ye C."/>
            <person name="Du Z."/>
            <person name="Lin W."/>
            <person name="Wang J."/>
            <person name="Yu J."/>
            <person name="Yang H."/>
            <person name="Wang J."/>
            <person name="Huang P."/>
            <person name="Yang R."/>
        </authorList>
    </citation>
    <scope>NUCLEOTIDE SEQUENCE [LARGE SCALE GENOMIC DNA]</scope>
    <source>
        <strain>91001 / Biovar Mediaevalis</strain>
    </source>
</reference>